<gene>
    <name evidence="1" type="primary">tpiA</name>
    <name type="ordered locus">Sputw3181_1066</name>
</gene>
<sequence length="260" mass="28043">MALRRPMVAGNWKMNGSAALAQELFKKFASKLQNDSAEVVLCPPSIYLESVRQLLEANKEALDGSLVRMGAQNLSQHDFGAYTGEVSGQMLKDSGCRYVIIGHSERRRMYGETSNIVAEKFAAAQKHGLTPILCVGESGPAREARRTFEVIAEELDIVIQKNGTMAFDNAIIAYEPLWAVGTGKSATPEQAQEVHAFIRKRLSEVSPFIGENIRILYGGSVTPSNAADLFAQPDVDGGLIGGASLNSSEFLSLCTIAMSA</sequence>
<evidence type="ECO:0000255" key="1">
    <source>
        <dbReference type="HAMAP-Rule" id="MF_00147"/>
    </source>
</evidence>
<protein>
    <recommendedName>
        <fullName evidence="1">Triosephosphate isomerase</fullName>
        <shortName evidence="1">TIM</shortName>
        <shortName evidence="1">TPI</shortName>
        <ecNumber evidence="1">5.3.1.1</ecNumber>
    </recommendedName>
    <alternativeName>
        <fullName evidence="1">Triose-phosphate isomerase</fullName>
    </alternativeName>
</protein>
<proteinExistence type="inferred from homology"/>
<dbReference type="EC" id="5.3.1.1" evidence="1"/>
<dbReference type="EMBL" id="CP000503">
    <property type="protein sequence ID" value="ABM23916.1"/>
    <property type="molecule type" value="Genomic_DNA"/>
</dbReference>
<dbReference type="RefSeq" id="WP_006082720.1">
    <property type="nucleotide sequence ID" value="NC_008750.1"/>
</dbReference>
<dbReference type="SMR" id="A1RGX1"/>
<dbReference type="GeneID" id="67444453"/>
<dbReference type="KEGG" id="shw:Sputw3181_1066"/>
<dbReference type="HOGENOM" id="CLU_024251_2_1_6"/>
<dbReference type="UniPathway" id="UPA00109">
    <property type="reaction ID" value="UER00189"/>
</dbReference>
<dbReference type="UniPathway" id="UPA00138"/>
<dbReference type="Proteomes" id="UP000002597">
    <property type="component" value="Chromosome"/>
</dbReference>
<dbReference type="GO" id="GO:0005829">
    <property type="term" value="C:cytosol"/>
    <property type="evidence" value="ECO:0007669"/>
    <property type="project" value="TreeGrafter"/>
</dbReference>
<dbReference type="GO" id="GO:0004807">
    <property type="term" value="F:triose-phosphate isomerase activity"/>
    <property type="evidence" value="ECO:0007669"/>
    <property type="project" value="UniProtKB-UniRule"/>
</dbReference>
<dbReference type="GO" id="GO:0006094">
    <property type="term" value="P:gluconeogenesis"/>
    <property type="evidence" value="ECO:0007669"/>
    <property type="project" value="UniProtKB-UniRule"/>
</dbReference>
<dbReference type="GO" id="GO:0046166">
    <property type="term" value="P:glyceraldehyde-3-phosphate biosynthetic process"/>
    <property type="evidence" value="ECO:0007669"/>
    <property type="project" value="TreeGrafter"/>
</dbReference>
<dbReference type="GO" id="GO:0019563">
    <property type="term" value="P:glycerol catabolic process"/>
    <property type="evidence" value="ECO:0007669"/>
    <property type="project" value="TreeGrafter"/>
</dbReference>
<dbReference type="GO" id="GO:0006096">
    <property type="term" value="P:glycolytic process"/>
    <property type="evidence" value="ECO:0007669"/>
    <property type="project" value="UniProtKB-UniRule"/>
</dbReference>
<dbReference type="CDD" id="cd00311">
    <property type="entry name" value="TIM"/>
    <property type="match status" value="1"/>
</dbReference>
<dbReference type="FunFam" id="3.20.20.70:FF:000016">
    <property type="entry name" value="Triosephosphate isomerase"/>
    <property type="match status" value="1"/>
</dbReference>
<dbReference type="Gene3D" id="3.20.20.70">
    <property type="entry name" value="Aldolase class I"/>
    <property type="match status" value="1"/>
</dbReference>
<dbReference type="HAMAP" id="MF_00147_B">
    <property type="entry name" value="TIM_B"/>
    <property type="match status" value="1"/>
</dbReference>
<dbReference type="InterPro" id="IPR013785">
    <property type="entry name" value="Aldolase_TIM"/>
</dbReference>
<dbReference type="InterPro" id="IPR035990">
    <property type="entry name" value="TIM_sf"/>
</dbReference>
<dbReference type="InterPro" id="IPR022896">
    <property type="entry name" value="TrioseP_Isoase_bac/euk"/>
</dbReference>
<dbReference type="InterPro" id="IPR000652">
    <property type="entry name" value="Triosephosphate_isomerase"/>
</dbReference>
<dbReference type="InterPro" id="IPR020861">
    <property type="entry name" value="Triosephosphate_isomerase_AS"/>
</dbReference>
<dbReference type="NCBIfam" id="TIGR00419">
    <property type="entry name" value="tim"/>
    <property type="match status" value="1"/>
</dbReference>
<dbReference type="PANTHER" id="PTHR21139">
    <property type="entry name" value="TRIOSEPHOSPHATE ISOMERASE"/>
    <property type="match status" value="1"/>
</dbReference>
<dbReference type="PANTHER" id="PTHR21139:SF42">
    <property type="entry name" value="TRIOSEPHOSPHATE ISOMERASE"/>
    <property type="match status" value="1"/>
</dbReference>
<dbReference type="Pfam" id="PF00121">
    <property type="entry name" value="TIM"/>
    <property type="match status" value="1"/>
</dbReference>
<dbReference type="SUPFAM" id="SSF51351">
    <property type="entry name" value="Triosephosphate isomerase (TIM)"/>
    <property type="match status" value="1"/>
</dbReference>
<dbReference type="PROSITE" id="PS00171">
    <property type="entry name" value="TIM_1"/>
    <property type="match status" value="1"/>
</dbReference>
<dbReference type="PROSITE" id="PS51440">
    <property type="entry name" value="TIM_2"/>
    <property type="match status" value="1"/>
</dbReference>
<reference key="1">
    <citation type="submission" date="2006-12" db="EMBL/GenBank/DDBJ databases">
        <title>Complete sequence of Shewanella sp. W3-18-1.</title>
        <authorList>
            <consortium name="US DOE Joint Genome Institute"/>
            <person name="Copeland A."/>
            <person name="Lucas S."/>
            <person name="Lapidus A."/>
            <person name="Barry K."/>
            <person name="Detter J.C."/>
            <person name="Glavina del Rio T."/>
            <person name="Hammon N."/>
            <person name="Israni S."/>
            <person name="Dalin E."/>
            <person name="Tice H."/>
            <person name="Pitluck S."/>
            <person name="Chain P."/>
            <person name="Malfatti S."/>
            <person name="Shin M."/>
            <person name="Vergez L."/>
            <person name="Schmutz J."/>
            <person name="Larimer F."/>
            <person name="Land M."/>
            <person name="Hauser L."/>
            <person name="Kyrpides N."/>
            <person name="Lykidis A."/>
            <person name="Tiedje J."/>
            <person name="Richardson P."/>
        </authorList>
    </citation>
    <scope>NUCLEOTIDE SEQUENCE [LARGE SCALE GENOMIC DNA]</scope>
    <source>
        <strain>W3-18-1</strain>
    </source>
</reference>
<feature type="chain" id="PRO_0000307559" description="Triosephosphate isomerase">
    <location>
        <begin position="1"/>
        <end position="260"/>
    </location>
</feature>
<feature type="active site" description="Electrophile" evidence="1">
    <location>
        <position position="103"/>
    </location>
</feature>
<feature type="active site" description="Proton acceptor" evidence="1">
    <location>
        <position position="175"/>
    </location>
</feature>
<feature type="binding site" evidence="1">
    <location>
        <begin position="11"/>
        <end position="13"/>
    </location>
    <ligand>
        <name>substrate</name>
    </ligand>
</feature>
<feature type="binding site" evidence="1">
    <location>
        <position position="181"/>
    </location>
    <ligand>
        <name>substrate</name>
    </ligand>
</feature>
<feature type="binding site" evidence="1">
    <location>
        <position position="220"/>
    </location>
    <ligand>
        <name>substrate</name>
    </ligand>
</feature>
<feature type="binding site" evidence="1">
    <location>
        <begin position="241"/>
        <end position="242"/>
    </location>
    <ligand>
        <name>substrate</name>
    </ligand>
</feature>
<accession>A1RGX1</accession>
<comment type="function">
    <text evidence="1">Involved in the gluconeogenesis. Catalyzes stereospecifically the conversion of dihydroxyacetone phosphate (DHAP) to D-glyceraldehyde-3-phosphate (G3P).</text>
</comment>
<comment type="catalytic activity">
    <reaction evidence="1">
        <text>D-glyceraldehyde 3-phosphate = dihydroxyacetone phosphate</text>
        <dbReference type="Rhea" id="RHEA:18585"/>
        <dbReference type="ChEBI" id="CHEBI:57642"/>
        <dbReference type="ChEBI" id="CHEBI:59776"/>
        <dbReference type="EC" id="5.3.1.1"/>
    </reaction>
</comment>
<comment type="pathway">
    <text evidence="1">Carbohydrate biosynthesis; gluconeogenesis.</text>
</comment>
<comment type="pathway">
    <text evidence="1">Carbohydrate degradation; glycolysis; D-glyceraldehyde 3-phosphate from glycerone phosphate: step 1/1.</text>
</comment>
<comment type="subunit">
    <text evidence="1">Homodimer.</text>
</comment>
<comment type="subcellular location">
    <subcellularLocation>
        <location evidence="1">Cytoplasm</location>
    </subcellularLocation>
</comment>
<comment type="similarity">
    <text evidence="1">Belongs to the triosephosphate isomerase family.</text>
</comment>
<keyword id="KW-0963">Cytoplasm</keyword>
<keyword id="KW-0312">Gluconeogenesis</keyword>
<keyword id="KW-0324">Glycolysis</keyword>
<keyword id="KW-0413">Isomerase</keyword>
<organism>
    <name type="scientific">Shewanella sp. (strain W3-18-1)</name>
    <dbReference type="NCBI Taxonomy" id="351745"/>
    <lineage>
        <taxon>Bacteria</taxon>
        <taxon>Pseudomonadati</taxon>
        <taxon>Pseudomonadota</taxon>
        <taxon>Gammaproteobacteria</taxon>
        <taxon>Alteromonadales</taxon>
        <taxon>Shewanellaceae</taxon>
        <taxon>Shewanella</taxon>
    </lineage>
</organism>
<name>TPIS_SHESW</name>